<reference key="1">
    <citation type="journal article" date="2001" name="J. Bacteriol.">
        <title>Genome sequence and comparative analysis of the solvent-producing bacterium Clostridium acetobutylicum.</title>
        <authorList>
            <person name="Noelling J."/>
            <person name="Breton G."/>
            <person name="Omelchenko M.V."/>
            <person name="Makarova K.S."/>
            <person name="Zeng Q."/>
            <person name="Gibson R."/>
            <person name="Lee H.M."/>
            <person name="Dubois J."/>
            <person name="Qiu D."/>
            <person name="Hitti J."/>
            <person name="Wolf Y.I."/>
            <person name="Tatusov R.L."/>
            <person name="Sabathe F."/>
            <person name="Doucette-Stamm L.A."/>
            <person name="Soucaille P."/>
            <person name="Daly M.J."/>
            <person name="Bennett G.N."/>
            <person name="Koonin E.V."/>
            <person name="Smith D.R."/>
        </authorList>
    </citation>
    <scope>NUCLEOTIDE SEQUENCE [LARGE SCALE GENOMIC DNA]</scope>
    <source>
        <strain>ATCC 824 / DSM 792 / JCM 1419 / IAM 19013 / LMG 5710 / NBRC 13948 / NRRL B-527 / VKM B-1787 / 2291 / W</strain>
    </source>
</reference>
<sequence length="239" mass="26112">MIILPAIDIKQGKCVRLYQGRFEKSSVVAESPALTAKSFENDGAKYIHVVDLDGALEGEIINLDAVKSIVQVTSVPIELGGGIRNIKVVEKLINIGVKRIILGTAALKDKEFTREAIKEYGKSIAVGIDAKDGYVAVNGWLNVSKINYIEFAKIMEDMGTEDIILTDISKDGTLKGPNFDMLKKLQENVNCNITASGGIKDLDDLIKLKEMNIYGAIVGKAIYSEKINLKEAIAVIEKR</sequence>
<accession>Q97KH9</accession>
<proteinExistence type="inferred from homology"/>
<protein>
    <recommendedName>
        <fullName>1-(5-phosphoribosyl)-5-[(5-phosphoribosylamino)methylideneamino] imidazole-4-carboxamide isomerase</fullName>
        <ecNumber>5.3.1.16</ecNumber>
    </recommendedName>
    <alternativeName>
        <fullName>Phosphoribosylformimino-5-aminoimidazole carboxamide ribotide isomerase</fullName>
    </alternativeName>
</protein>
<feature type="chain" id="PRO_0000141998" description="1-(5-phosphoribosyl)-5-[(5-phosphoribosylamino)methylideneamino] imidazole-4-carboxamide isomerase">
    <location>
        <begin position="1"/>
        <end position="239"/>
    </location>
</feature>
<feature type="active site" description="Proton acceptor" evidence="1">
    <location>
        <position position="8"/>
    </location>
</feature>
<feature type="active site" description="Proton donor" evidence="1">
    <location>
        <position position="129"/>
    </location>
</feature>
<dbReference type="EC" id="5.3.1.16"/>
<dbReference type="EMBL" id="AE001437">
    <property type="protein sequence ID" value="AAK78916.1"/>
    <property type="molecule type" value="Genomic_DNA"/>
</dbReference>
<dbReference type="PIR" id="A97016">
    <property type="entry name" value="A97016"/>
</dbReference>
<dbReference type="RefSeq" id="NP_347576.1">
    <property type="nucleotide sequence ID" value="NC_003030.1"/>
</dbReference>
<dbReference type="RefSeq" id="WP_010964258.1">
    <property type="nucleotide sequence ID" value="NC_003030.1"/>
</dbReference>
<dbReference type="SMR" id="Q97KH9"/>
<dbReference type="STRING" id="272562.CA_C0940"/>
<dbReference type="GeneID" id="44997450"/>
<dbReference type="KEGG" id="cac:CA_C0940"/>
<dbReference type="PATRIC" id="fig|272562.8.peg.1150"/>
<dbReference type="eggNOG" id="COG0106">
    <property type="taxonomic scope" value="Bacteria"/>
</dbReference>
<dbReference type="HOGENOM" id="CLU_048577_1_1_9"/>
<dbReference type="OrthoDB" id="9807749at2"/>
<dbReference type="UniPathway" id="UPA00031">
    <property type="reaction ID" value="UER00009"/>
</dbReference>
<dbReference type="Proteomes" id="UP000000814">
    <property type="component" value="Chromosome"/>
</dbReference>
<dbReference type="GO" id="GO:0005737">
    <property type="term" value="C:cytoplasm"/>
    <property type="evidence" value="ECO:0007669"/>
    <property type="project" value="UniProtKB-SubCell"/>
</dbReference>
<dbReference type="GO" id="GO:0003949">
    <property type="term" value="F:1-(5-phosphoribosyl)-5-[(5-phosphoribosylamino)methylideneamino]imidazole-4-carboxamide isomerase activity"/>
    <property type="evidence" value="ECO:0007669"/>
    <property type="project" value="UniProtKB-UniRule"/>
</dbReference>
<dbReference type="GO" id="GO:0000105">
    <property type="term" value="P:L-histidine biosynthetic process"/>
    <property type="evidence" value="ECO:0007669"/>
    <property type="project" value="UniProtKB-UniRule"/>
</dbReference>
<dbReference type="GO" id="GO:0000162">
    <property type="term" value="P:L-tryptophan biosynthetic process"/>
    <property type="evidence" value="ECO:0007669"/>
    <property type="project" value="TreeGrafter"/>
</dbReference>
<dbReference type="CDD" id="cd04732">
    <property type="entry name" value="HisA"/>
    <property type="match status" value="1"/>
</dbReference>
<dbReference type="FunFam" id="3.20.20.70:FF:000009">
    <property type="entry name" value="1-(5-phosphoribosyl)-5-[(5-phosphoribosylamino)methylideneamino] imidazole-4-carboxamide isomerase"/>
    <property type="match status" value="1"/>
</dbReference>
<dbReference type="Gene3D" id="3.20.20.70">
    <property type="entry name" value="Aldolase class I"/>
    <property type="match status" value="1"/>
</dbReference>
<dbReference type="HAMAP" id="MF_01014">
    <property type="entry name" value="HisA"/>
    <property type="match status" value="1"/>
</dbReference>
<dbReference type="InterPro" id="IPR013785">
    <property type="entry name" value="Aldolase_TIM"/>
</dbReference>
<dbReference type="InterPro" id="IPR006062">
    <property type="entry name" value="His_biosynth"/>
</dbReference>
<dbReference type="InterPro" id="IPR006063">
    <property type="entry name" value="HisA_bact_arch"/>
</dbReference>
<dbReference type="InterPro" id="IPR044524">
    <property type="entry name" value="Isoase_HisA-like"/>
</dbReference>
<dbReference type="InterPro" id="IPR023016">
    <property type="entry name" value="Isoase_HisA-like_bact"/>
</dbReference>
<dbReference type="InterPro" id="IPR011060">
    <property type="entry name" value="RibuloseP-bd_barrel"/>
</dbReference>
<dbReference type="NCBIfam" id="TIGR00007">
    <property type="entry name" value="1-(5-phosphoribosyl)-5-[(5-phosphoribosylamino)methylideneamino]imidazole-4-carboxamide isomerase"/>
    <property type="match status" value="1"/>
</dbReference>
<dbReference type="PANTHER" id="PTHR43090">
    <property type="entry name" value="1-(5-PHOSPHORIBOSYL)-5-[(5-PHOSPHORIBOSYLAMINO)METHYLIDENEAMINO] IMIDAZOLE-4-CARBOXAMIDE ISOMERASE"/>
    <property type="match status" value="1"/>
</dbReference>
<dbReference type="PANTHER" id="PTHR43090:SF2">
    <property type="entry name" value="1-(5-PHOSPHORIBOSYL)-5-[(5-PHOSPHORIBOSYLAMINO)METHYLIDENEAMINO] IMIDAZOLE-4-CARBOXAMIDE ISOMERASE"/>
    <property type="match status" value="1"/>
</dbReference>
<dbReference type="Pfam" id="PF00977">
    <property type="entry name" value="His_biosynth"/>
    <property type="match status" value="1"/>
</dbReference>
<dbReference type="SUPFAM" id="SSF51366">
    <property type="entry name" value="Ribulose-phoshate binding barrel"/>
    <property type="match status" value="1"/>
</dbReference>
<gene>
    <name type="primary">hisA</name>
    <name type="ordered locus">CA_C0940</name>
</gene>
<organism>
    <name type="scientific">Clostridium acetobutylicum (strain ATCC 824 / DSM 792 / JCM 1419 / IAM 19013 / LMG 5710 / NBRC 13948 / NRRL B-527 / VKM B-1787 / 2291 / W)</name>
    <dbReference type="NCBI Taxonomy" id="272562"/>
    <lineage>
        <taxon>Bacteria</taxon>
        <taxon>Bacillati</taxon>
        <taxon>Bacillota</taxon>
        <taxon>Clostridia</taxon>
        <taxon>Eubacteriales</taxon>
        <taxon>Clostridiaceae</taxon>
        <taxon>Clostridium</taxon>
    </lineage>
</organism>
<comment type="catalytic activity">
    <reaction>
        <text>1-(5-phospho-beta-D-ribosyl)-5-[(5-phospho-beta-D-ribosylamino)methylideneamino]imidazole-4-carboxamide = 5-[(5-phospho-1-deoxy-D-ribulos-1-ylimino)methylamino]-1-(5-phospho-beta-D-ribosyl)imidazole-4-carboxamide</text>
        <dbReference type="Rhea" id="RHEA:15469"/>
        <dbReference type="ChEBI" id="CHEBI:58435"/>
        <dbReference type="ChEBI" id="CHEBI:58525"/>
        <dbReference type="EC" id="5.3.1.16"/>
    </reaction>
</comment>
<comment type="pathway">
    <text>Amino-acid biosynthesis; L-histidine biosynthesis; L-histidine from 5-phospho-alpha-D-ribose 1-diphosphate: step 4/9.</text>
</comment>
<comment type="subcellular location">
    <subcellularLocation>
        <location evidence="1">Cytoplasm</location>
    </subcellularLocation>
</comment>
<comment type="similarity">
    <text evidence="2">Belongs to the HisA/HisF family.</text>
</comment>
<name>HIS4_CLOAB</name>
<evidence type="ECO:0000250" key="1"/>
<evidence type="ECO:0000305" key="2"/>
<keyword id="KW-0028">Amino-acid biosynthesis</keyword>
<keyword id="KW-0963">Cytoplasm</keyword>
<keyword id="KW-0368">Histidine biosynthesis</keyword>
<keyword id="KW-0413">Isomerase</keyword>
<keyword id="KW-1185">Reference proteome</keyword>